<keyword id="KW-0067">ATP-binding</keyword>
<keyword id="KW-0227">DNA damage</keyword>
<keyword id="KW-0234">DNA repair</keyword>
<keyword id="KW-0238">DNA-binding</keyword>
<keyword id="KW-0547">Nucleotide-binding</keyword>
<dbReference type="EMBL" id="CP000903">
    <property type="protein sequence ID" value="ABY44713.1"/>
    <property type="molecule type" value="Genomic_DNA"/>
</dbReference>
<dbReference type="RefSeq" id="WP_012261532.1">
    <property type="nucleotide sequence ID" value="NC_010184.1"/>
</dbReference>
<dbReference type="SMR" id="A9VS13"/>
<dbReference type="KEGG" id="bwe:BcerKBAB4_3540"/>
<dbReference type="eggNOG" id="COG0249">
    <property type="taxonomic scope" value="Bacteria"/>
</dbReference>
<dbReference type="HOGENOM" id="CLU_002472_3_1_9"/>
<dbReference type="Proteomes" id="UP000002154">
    <property type="component" value="Chromosome"/>
</dbReference>
<dbReference type="GO" id="GO:0005829">
    <property type="term" value="C:cytosol"/>
    <property type="evidence" value="ECO:0007669"/>
    <property type="project" value="TreeGrafter"/>
</dbReference>
<dbReference type="GO" id="GO:0005524">
    <property type="term" value="F:ATP binding"/>
    <property type="evidence" value="ECO:0007669"/>
    <property type="project" value="UniProtKB-UniRule"/>
</dbReference>
<dbReference type="GO" id="GO:0140664">
    <property type="term" value="F:ATP-dependent DNA damage sensor activity"/>
    <property type="evidence" value="ECO:0007669"/>
    <property type="project" value="InterPro"/>
</dbReference>
<dbReference type="GO" id="GO:0003684">
    <property type="term" value="F:damaged DNA binding"/>
    <property type="evidence" value="ECO:0007669"/>
    <property type="project" value="UniProtKB-UniRule"/>
</dbReference>
<dbReference type="GO" id="GO:0030983">
    <property type="term" value="F:mismatched DNA binding"/>
    <property type="evidence" value="ECO:0007669"/>
    <property type="project" value="InterPro"/>
</dbReference>
<dbReference type="GO" id="GO:0006298">
    <property type="term" value="P:mismatch repair"/>
    <property type="evidence" value="ECO:0007669"/>
    <property type="project" value="UniProtKB-UniRule"/>
</dbReference>
<dbReference type="CDD" id="cd03284">
    <property type="entry name" value="ABC_MutS1"/>
    <property type="match status" value="1"/>
</dbReference>
<dbReference type="FunFam" id="1.10.1420.10:FF:000007">
    <property type="entry name" value="DNA mismatch repair protein MutS"/>
    <property type="match status" value="1"/>
</dbReference>
<dbReference type="FunFam" id="3.30.420.110:FF:000007">
    <property type="entry name" value="DNA mismatch repair protein MutS"/>
    <property type="match status" value="1"/>
</dbReference>
<dbReference type="FunFam" id="3.40.1170.10:FF:000001">
    <property type="entry name" value="DNA mismatch repair protein MutS"/>
    <property type="match status" value="1"/>
</dbReference>
<dbReference type="FunFam" id="3.40.50.300:FF:000896">
    <property type="entry name" value="DNA mismatch repair protein MutS"/>
    <property type="match status" value="1"/>
</dbReference>
<dbReference type="Gene3D" id="1.10.1420.10">
    <property type="match status" value="2"/>
</dbReference>
<dbReference type="Gene3D" id="3.40.1170.10">
    <property type="entry name" value="DNA repair protein MutS, domain I"/>
    <property type="match status" value="1"/>
</dbReference>
<dbReference type="Gene3D" id="3.30.420.110">
    <property type="entry name" value="MutS, connector domain"/>
    <property type="match status" value="1"/>
</dbReference>
<dbReference type="Gene3D" id="3.40.50.300">
    <property type="entry name" value="P-loop containing nucleotide triphosphate hydrolases"/>
    <property type="match status" value="1"/>
</dbReference>
<dbReference type="HAMAP" id="MF_00096">
    <property type="entry name" value="MutS"/>
    <property type="match status" value="1"/>
</dbReference>
<dbReference type="InterPro" id="IPR005748">
    <property type="entry name" value="DNA_mismatch_repair_MutS"/>
</dbReference>
<dbReference type="InterPro" id="IPR007695">
    <property type="entry name" value="DNA_mismatch_repair_MutS-lik_N"/>
</dbReference>
<dbReference type="InterPro" id="IPR017261">
    <property type="entry name" value="DNA_mismatch_repair_MutS/MSH"/>
</dbReference>
<dbReference type="InterPro" id="IPR000432">
    <property type="entry name" value="DNA_mismatch_repair_MutS_C"/>
</dbReference>
<dbReference type="InterPro" id="IPR007861">
    <property type="entry name" value="DNA_mismatch_repair_MutS_clamp"/>
</dbReference>
<dbReference type="InterPro" id="IPR007696">
    <property type="entry name" value="DNA_mismatch_repair_MutS_core"/>
</dbReference>
<dbReference type="InterPro" id="IPR016151">
    <property type="entry name" value="DNA_mismatch_repair_MutS_N"/>
</dbReference>
<dbReference type="InterPro" id="IPR036187">
    <property type="entry name" value="DNA_mismatch_repair_MutS_sf"/>
</dbReference>
<dbReference type="InterPro" id="IPR007860">
    <property type="entry name" value="DNA_mmatch_repair_MutS_con_dom"/>
</dbReference>
<dbReference type="InterPro" id="IPR045076">
    <property type="entry name" value="MutS"/>
</dbReference>
<dbReference type="InterPro" id="IPR036678">
    <property type="entry name" value="MutS_con_dom_sf"/>
</dbReference>
<dbReference type="InterPro" id="IPR027417">
    <property type="entry name" value="P-loop_NTPase"/>
</dbReference>
<dbReference type="NCBIfam" id="TIGR01070">
    <property type="entry name" value="mutS1"/>
    <property type="match status" value="1"/>
</dbReference>
<dbReference type="NCBIfam" id="NF003810">
    <property type="entry name" value="PRK05399.1"/>
    <property type="match status" value="1"/>
</dbReference>
<dbReference type="PANTHER" id="PTHR11361:SF34">
    <property type="entry name" value="DNA MISMATCH REPAIR PROTEIN MSH1, MITOCHONDRIAL"/>
    <property type="match status" value="1"/>
</dbReference>
<dbReference type="PANTHER" id="PTHR11361">
    <property type="entry name" value="DNA MISMATCH REPAIR PROTEIN MUTS FAMILY MEMBER"/>
    <property type="match status" value="1"/>
</dbReference>
<dbReference type="Pfam" id="PF01624">
    <property type="entry name" value="MutS_I"/>
    <property type="match status" value="1"/>
</dbReference>
<dbReference type="Pfam" id="PF05188">
    <property type="entry name" value="MutS_II"/>
    <property type="match status" value="1"/>
</dbReference>
<dbReference type="Pfam" id="PF05192">
    <property type="entry name" value="MutS_III"/>
    <property type="match status" value="1"/>
</dbReference>
<dbReference type="Pfam" id="PF05190">
    <property type="entry name" value="MutS_IV"/>
    <property type="match status" value="1"/>
</dbReference>
<dbReference type="Pfam" id="PF00488">
    <property type="entry name" value="MutS_V"/>
    <property type="match status" value="1"/>
</dbReference>
<dbReference type="PIRSF" id="PIRSF037677">
    <property type="entry name" value="DNA_mis_repair_Msh6"/>
    <property type="match status" value="1"/>
</dbReference>
<dbReference type="SMART" id="SM00534">
    <property type="entry name" value="MUTSac"/>
    <property type="match status" value="1"/>
</dbReference>
<dbReference type="SMART" id="SM00533">
    <property type="entry name" value="MUTSd"/>
    <property type="match status" value="1"/>
</dbReference>
<dbReference type="SUPFAM" id="SSF55271">
    <property type="entry name" value="DNA repair protein MutS, domain I"/>
    <property type="match status" value="1"/>
</dbReference>
<dbReference type="SUPFAM" id="SSF53150">
    <property type="entry name" value="DNA repair protein MutS, domain II"/>
    <property type="match status" value="1"/>
</dbReference>
<dbReference type="SUPFAM" id="SSF48334">
    <property type="entry name" value="DNA repair protein MutS, domain III"/>
    <property type="match status" value="1"/>
</dbReference>
<dbReference type="SUPFAM" id="SSF52540">
    <property type="entry name" value="P-loop containing nucleoside triphosphate hydrolases"/>
    <property type="match status" value="1"/>
</dbReference>
<dbReference type="PROSITE" id="PS00486">
    <property type="entry name" value="DNA_MISMATCH_REPAIR_2"/>
    <property type="match status" value="1"/>
</dbReference>
<proteinExistence type="inferred from homology"/>
<gene>
    <name evidence="1" type="primary">mutS</name>
    <name type="ordered locus">BcerKBAB4_3540</name>
</gene>
<protein>
    <recommendedName>
        <fullName evidence="1">DNA mismatch repair protein MutS</fullName>
    </recommendedName>
</protein>
<name>MUTS_BACMK</name>
<accession>A9VS13</accession>
<feature type="chain" id="PRO_1000093607" description="DNA mismatch repair protein MutS">
    <location>
        <begin position="1"/>
        <end position="890"/>
    </location>
</feature>
<feature type="binding site" evidence="1">
    <location>
        <begin position="607"/>
        <end position="614"/>
    </location>
    <ligand>
        <name>ATP</name>
        <dbReference type="ChEBI" id="CHEBI:30616"/>
    </ligand>
</feature>
<sequence length="890" mass="100748">MTQYTPMIQQYLKVKADYQDAFLFFRLGDFYEMFFEDAVKAAHELEITLTSRDGGSSERIPMCGVPHHAAKNYIEQLVEKGYKVAVCEQVEDPKTAKGVVRREVVQLITPGTMMEGRTIDEKENNFLAALTHFEDGSYALACNDLTTGQNTVTLLTGSVEDILLEVYATGSKEIVVDSTFSKDELNKLTETLKMTISYEDTTTIPEGLEHLVKSVSQAKLIKAIGRLFNYVIRTQKRSLDHLQPVEIYYTNQFMKIDVHSKRNLELTETLRTKEKTGSLLWLLDKTKTAMGGRMLKQWMERPLIQKEKVEERLEMVETFVNDYFLREDLKEKLKEVYDLERLAGKVAFGNVNARDLLQLRRSLLQVPAILEAISLLDNAYAARLIQGADPCESLTELLGRSIQENPPLSIKDGDIIKDGYNDKLDQYRYVSKNGKTWIAELEKRERDITGVKSLKIGYNRIFGYYIEVTKANLGALPEGRYERKQTLANAERFITDELKEKETLILEAEEKIVQLEYDLFTALREEVKVFIPKLQHLAKVISELDVLQSFATVSEEEQFVKPVLTNKREIFIKDGRHPVVEKVLNGKLYVPNDCIMPEKMDVFLITGPNMSGKSTYMRQLALVTVMSQIGCFVPATEAVLPVFDQIFTRIGAADDLISGQSTFMVEMLEAKNAIANASERSLILFDEIGRGTSTYDGMALAQAIIEHIHDQIGAKTLFSTHYHELTVLEESLDQLKNVHVSAIEENGKVVFLHKIQDGAADKSYGIHVAQLAELPESLIARAKEVLAQLEGQEEIVIPKRVEVKVPEVAPEPVVVKEEPAEIQETKVETEEESQLSFFGGEQSSKKQDKSVLDAKETAVLAQIKKIDLLDMTPLEAMNELYRLQKKLKKG</sequence>
<comment type="function">
    <text evidence="1">This protein is involved in the repair of mismatches in DNA. It is possible that it carries out the mismatch recognition step. This protein has a weak ATPase activity.</text>
</comment>
<comment type="similarity">
    <text evidence="1">Belongs to the DNA mismatch repair MutS family.</text>
</comment>
<organism>
    <name type="scientific">Bacillus mycoides (strain KBAB4)</name>
    <name type="common">Bacillus weihenstephanensis</name>
    <dbReference type="NCBI Taxonomy" id="315730"/>
    <lineage>
        <taxon>Bacteria</taxon>
        <taxon>Bacillati</taxon>
        <taxon>Bacillota</taxon>
        <taxon>Bacilli</taxon>
        <taxon>Bacillales</taxon>
        <taxon>Bacillaceae</taxon>
        <taxon>Bacillus</taxon>
        <taxon>Bacillus cereus group</taxon>
    </lineage>
</organism>
<evidence type="ECO:0000255" key="1">
    <source>
        <dbReference type="HAMAP-Rule" id="MF_00096"/>
    </source>
</evidence>
<reference key="1">
    <citation type="journal article" date="2008" name="Chem. Biol. Interact.">
        <title>Extending the Bacillus cereus group genomics to putative food-borne pathogens of different toxicity.</title>
        <authorList>
            <person name="Lapidus A."/>
            <person name="Goltsman E."/>
            <person name="Auger S."/>
            <person name="Galleron N."/>
            <person name="Segurens B."/>
            <person name="Dossat C."/>
            <person name="Land M.L."/>
            <person name="Broussolle V."/>
            <person name="Brillard J."/>
            <person name="Guinebretiere M.-H."/>
            <person name="Sanchis V."/>
            <person name="Nguen-the C."/>
            <person name="Lereclus D."/>
            <person name="Richardson P."/>
            <person name="Wincker P."/>
            <person name="Weissenbach J."/>
            <person name="Ehrlich S.D."/>
            <person name="Sorokin A."/>
        </authorList>
    </citation>
    <scope>NUCLEOTIDE SEQUENCE [LARGE SCALE GENOMIC DNA]</scope>
    <source>
        <strain>KBAB4</strain>
    </source>
</reference>